<proteinExistence type="inferred from homology"/>
<evidence type="ECO:0000250" key="1"/>
<evidence type="ECO:0000255" key="2"/>
<evidence type="ECO:0000305" key="3"/>
<gene>
    <name type="primary">bdbD</name>
    <name type="ordered locus">BA_0544</name>
    <name type="ordered locus">GBAA_0544</name>
    <name type="ordered locus">BAS0513</name>
</gene>
<comment type="function">
    <text evidence="1">May be required for disulfide bond formation in some proteins.</text>
</comment>
<comment type="similarity">
    <text evidence="3">Belongs to the thioredoxin family. DsbA subfamily.</text>
</comment>
<comment type="sequence caution" evidence="3">
    <conflict type="erroneous initiation">
        <sequence resource="EMBL-CDS" id="AAT52842"/>
    </conflict>
</comment>
<organism>
    <name type="scientific">Bacillus anthracis</name>
    <dbReference type="NCBI Taxonomy" id="1392"/>
    <lineage>
        <taxon>Bacteria</taxon>
        <taxon>Bacillati</taxon>
        <taxon>Bacillota</taxon>
        <taxon>Bacilli</taxon>
        <taxon>Bacillales</taxon>
        <taxon>Bacillaceae</taxon>
        <taxon>Bacillus</taxon>
        <taxon>Bacillus cereus group</taxon>
    </lineage>
</organism>
<protein>
    <recommendedName>
        <fullName>Probable disulfide bond formation protein D</fullName>
    </recommendedName>
    <alternativeName>
        <fullName>Disulfide oxidoreductase D</fullName>
    </alternativeName>
    <alternativeName>
        <fullName>Thiol-disulfide oxidoreductase D</fullName>
    </alternativeName>
</protein>
<sequence>MKSSNKLMALGIVFSIAVLIVIGTIVYSIINDKKDKGNEMFAYSTQQSLGKDDAPVKVVEFGDFKCPACRTWDVTVLPRLKEEYIDKGKVQLYFINFPFIGKDSDLGAAAGEAIYKQDQDSFWIFYDEIYQSQKKDTEEWITEELLLNIVKEKLPKIDVEQFKKDLHSKEIKEKVRKDSDRAQKLKVQGAPSVYVNGNLANPDFDSLKKAIDKELKK</sequence>
<keyword id="KW-1015">Disulfide bond</keyword>
<keyword id="KW-0560">Oxidoreductase</keyword>
<keyword id="KW-0676">Redox-active center</keyword>
<keyword id="KW-1185">Reference proteome</keyword>
<keyword id="KW-0732">Signal</keyword>
<accession>Q81YT8</accession>
<accession>Q6I3N9</accession>
<accession>Q6KXF2</accession>
<dbReference type="EMBL" id="AE016879">
    <property type="protein sequence ID" value="AAP24565.1"/>
    <property type="molecule type" value="Genomic_DNA"/>
</dbReference>
<dbReference type="EMBL" id="AE017334">
    <property type="protein sequence ID" value="AAT29641.1"/>
    <property type="molecule type" value="Genomic_DNA"/>
</dbReference>
<dbReference type="EMBL" id="AE017225">
    <property type="protein sequence ID" value="AAT52842.1"/>
    <property type="status" value="ALT_INIT"/>
    <property type="molecule type" value="Genomic_DNA"/>
</dbReference>
<dbReference type="RefSeq" id="NP_843079.1">
    <property type="nucleotide sequence ID" value="NC_003997.3"/>
</dbReference>
<dbReference type="RefSeq" id="WP_000842726.1">
    <property type="nucleotide sequence ID" value="NZ_WXXJ01000029.1"/>
</dbReference>
<dbReference type="SMR" id="Q81YT8"/>
<dbReference type="STRING" id="261594.GBAA_0544"/>
<dbReference type="DNASU" id="1087837"/>
<dbReference type="GeneID" id="45020609"/>
<dbReference type="KEGG" id="ban:BA_0544"/>
<dbReference type="KEGG" id="bar:GBAA_0544"/>
<dbReference type="KEGG" id="bat:BAS0513"/>
<dbReference type="PATRIC" id="fig|198094.11.peg.542"/>
<dbReference type="eggNOG" id="COG1651">
    <property type="taxonomic scope" value="Bacteria"/>
</dbReference>
<dbReference type="HOGENOM" id="CLU_000288_47_1_9"/>
<dbReference type="OMA" id="APEDRYF"/>
<dbReference type="OrthoDB" id="117402at2"/>
<dbReference type="Proteomes" id="UP000000427">
    <property type="component" value="Chromosome"/>
</dbReference>
<dbReference type="Proteomes" id="UP000000594">
    <property type="component" value="Chromosome"/>
</dbReference>
<dbReference type="GO" id="GO:0016491">
    <property type="term" value="F:oxidoreductase activity"/>
    <property type="evidence" value="ECO:0007669"/>
    <property type="project" value="UniProtKB-KW"/>
</dbReference>
<dbReference type="Gene3D" id="3.40.30.10">
    <property type="entry name" value="Glutaredoxin"/>
    <property type="match status" value="1"/>
</dbReference>
<dbReference type="InterPro" id="IPR012336">
    <property type="entry name" value="Thioredoxin-like_fold"/>
</dbReference>
<dbReference type="InterPro" id="IPR036249">
    <property type="entry name" value="Thioredoxin-like_sf"/>
</dbReference>
<dbReference type="PANTHER" id="PTHR13887:SF14">
    <property type="entry name" value="DISULFIDE BOND FORMATION PROTEIN D"/>
    <property type="match status" value="1"/>
</dbReference>
<dbReference type="PANTHER" id="PTHR13887">
    <property type="entry name" value="GLUTATHIONE S-TRANSFERASE KAPPA"/>
    <property type="match status" value="1"/>
</dbReference>
<dbReference type="Pfam" id="PF13462">
    <property type="entry name" value="Thioredoxin_4"/>
    <property type="match status" value="1"/>
</dbReference>
<dbReference type="SUPFAM" id="SSF52833">
    <property type="entry name" value="Thioredoxin-like"/>
    <property type="match status" value="1"/>
</dbReference>
<reference key="1">
    <citation type="journal article" date="2003" name="Nature">
        <title>The genome sequence of Bacillus anthracis Ames and comparison to closely related bacteria.</title>
        <authorList>
            <person name="Read T.D."/>
            <person name="Peterson S.N."/>
            <person name="Tourasse N.J."/>
            <person name="Baillie L.W."/>
            <person name="Paulsen I.T."/>
            <person name="Nelson K.E."/>
            <person name="Tettelin H."/>
            <person name="Fouts D.E."/>
            <person name="Eisen J.A."/>
            <person name="Gill S.R."/>
            <person name="Holtzapple E.K."/>
            <person name="Okstad O.A."/>
            <person name="Helgason E."/>
            <person name="Rilstone J."/>
            <person name="Wu M."/>
            <person name="Kolonay J.F."/>
            <person name="Beanan M.J."/>
            <person name="Dodson R.J."/>
            <person name="Brinkac L.M."/>
            <person name="Gwinn M.L."/>
            <person name="DeBoy R.T."/>
            <person name="Madpu R."/>
            <person name="Daugherty S.C."/>
            <person name="Durkin A.S."/>
            <person name="Haft D.H."/>
            <person name="Nelson W.C."/>
            <person name="Peterson J.D."/>
            <person name="Pop M."/>
            <person name="Khouri H.M."/>
            <person name="Radune D."/>
            <person name="Benton J.L."/>
            <person name="Mahamoud Y."/>
            <person name="Jiang L."/>
            <person name="Hance I.R."/>
            <person name="Weidman J.F."/>
            <person name="Berry K.J."/>
            <person name="Plaut R.D."/>
            <person name="Wolf A.M."/>
            <person name="Watkins K.L."/>
            <person name="Nierman W.C."/>
            <person name="Hazen A."/>
            <person name="Cline R.T."/>
            <person name="Redmond C."/>
            <person name="Thwaite J.E."/>
            <person name="White O."/>
            <person name="Salzberg S.L."/>
            <person name="Thomason B."/>
            <person name="Friedlander A.M."/>
            <person name="Koehler T.M."/>
            <person name="Hanna P.C."/>
            <person name="Kolstoe A.-B."/>
            <person name="Fraser C.M."/>
        </authorList>
    </citation>
    <scope>NUCLEOTIDE SEQUENCE [LARGE SCALE GENOMIC DNA]</scope>
    <source>
        <strain>Ames / isolate Porton</strain>
    </source>
</reference>
<reference key="2">
    <citation type="journal article" date="2009" name="J. Bacteriol.">
        <title>The complete genome sequence of Bacillus anthracis Ames 'Ancestor'.</title>
        <authorList>
            <person name="Ravel J."/>
            <person name="Jiang L."/>
            <person name="Stanley S.T."/>
            <person name="Wilson M.R."/>
            <person name="Decker R.S."/>
            <person name="Read T.D."/>
            <person name="Worsham P."/>
            <person name="Keim P.S."/>
            <person name="Salzberg S.L."/>
            <person name="Fraser-Liggett C.M."/>
            <person name="Rasko D.A."/>
        </authorList>
    </citation>
    <scope>NUCLEOTIDE SEQUENCE [LARGE SCALE GENOMIC DNA]</scope>
    <source>
        <strain>Ames ancestor</strain>
    </source>
</reference>
<reference key="3">
    <citation type="submission" date="2004-01" db="EMBL/GenBank/DDBJ databases">
        <title>Complete genome sequence of Bacillus anthracis Sterne.</title>
        <authorList>
            <person name="Brettin T.S."/>
            <person name="Bruce D."/>
            <person name="Challacombe J.F."/>
            <person name="Gilna P."/>
            <person name="Han C."/>
            <person name="Hill K."/>
            <person name="Hitchcock P."/>
            <person name="Jackson P."/>
            <person name="Keim P."/>
            <person name="Longmire J."/>
            <person name="Lucas S."/>
            <person name="Okinaka R."/>
            <person name="Richardson P."/>
            <person name="Rubin E."/>
            <person name="Tice H."/>
        </authorList>
    </citation>
    <scope>NUCLEOTIDE SEQUENCE [LARGE SCALE GENOMIC DNA]</scope>
    <source>
        <strain>Sterne</strain>
    </source>
</reference>
<feature type="signal peptide" evidence="2">
    <location>
        <begin position="1"/>
        <end position="28"/>
    </location>
</feature>
<feature type="chain" id="PRO_0000034270" description="Probable disulfide bond formation protein D">
    <location>
        <begin position="29"/>
        <end position="217"/>
    </location>
</feature>
<feature type="disulfide bond" description="Redox-active" evidence="2">
    <location>
        <begin position="66"/>
        <end position="69"/>
    </location>
</feature>
<name>BDBD_BACAN</name>